<gene>
    <name evidence="6 7" type="primary">TEX1</name>
    <name evidence="6 7" type="synonym">CYP71D521</name>
</gene>
<comment type="function">
    <text evidence="4 5">Component of the monoterpenoid indole alkaloids (MIAs, e.g. echitovenine, tabersonine, lochnericine, 19-hydroxytabersonine and horhammericine) biosynthetic pathway; MIAs are used in cancer treatment and other medical applications (PubMed:31009114). Cytochrome P450 catalyzing the conversion of tabersonine to lochnericine (PubMed:29934299, PubMed:31009114).</text>
</comment>
<comment type="catalytic activity">
    <reaction evidence="4 5">
        <text>(-)-tabersonine + reduced [NADPH--hemoprotein reductase] + O2 = lochnericine + oxidized [NADPH--hemoprotein reductase] + H2O + H(+)</text>
        <dbReference type="Rhea" id="RHEA:61056"/>
        <dbReference type="Rhea" id="RHEA-COMP:11964"/>
        <dbReference type="Rhea" id="RHEA-COMP:11965"/>
        <dbReference type="ChEBI" id="CHEBI:15377"/>
        <dbReference type="ChEBI" id="CHEBI:15378"/>
        <dbReference type="ChEBI" id="CHEBI:15379"/>
        <dbReference type="ChEBI" id="CHEBI:57618"/>
        <dbReference type="ChEBI" id="CHEBI:57893"/>
        <dbReference type="ChEBI" id="CHEBI:58210"/>
        <dbReference type="ChEBI" id="CHEBI:144374"/>
    </reaction>
    <physiologicalReaction direction="left-to-right" evidence="4 5">
        <dbReference type="Rhea" id="RHEA:61057"/>
    </physiologicalReaction>
</comment>
<comment type="cofactor">
    <cofactor evidence="1">
        <name>heme</name>
        <dbReference type="ChEBI" id="CHEBI:30413"/>
    </cofactor>
</comment>
<comment type="biophysicochemical properties">
    <kinetics>
        <KM evidence="4">2.08 uM for tabersonine (at pH 8.0 and 30 degrees Celsius)</KM>
        <Vmax evidence="4">0.254 pmol/sec/ug enzyme with tabersonine as substrate (at pH 8.0 and 30 degrees Celsius)</Vmax>
    </kinetics>
</comment>
<comment type="pathway">
    <text evidence="5">Alkaloid biosynthesis.</text>
</comment>
<comment type="subcellular location">
    <subcellularLocation>
        <location evidence="4">Endoplasmic reticulum membrane</location>
        <topology evidence="2">Single-pass membrane protein</topology>
    </subcellularLocation>
</comment>
<comment type="tissue specificity">
    <text evidence="4">Mainly expressed in roots.</text>
</comment>
<comment type="disruption phenotype">
    <text evidence="4">Decreased lochnericine production, but increased tabersonine accumulation.</text>
</comment>
<comment type="similarity">
    <text evidence="8">Belongs to the cytochrome P450 family.</text>
</comment>
<proteinExistence type="evidence at protein level"/>
<dbReference type="EC" id="1.14.14.-" evidence="4 5"/>
<dbReference type="EMBL" id="MG873080">
    <property type="protein sequence ID" value="AVH80640.1"/>
    <property type="molecule type" value="mRNA"/>
</dbReference>
<dbReference type="SMR" id="A0A343URW6"/>
<dbReference type="GlyCosmos" id="A0A343URW6">
    <property type="glycosylation" value="2 sites, No reported glycans"/>
</dbReference>
<dbReference type="OrthoDB" id="2789670at2759"/>
<dbReference type="SABIO-RK" id="A0A343URW6"/>
<dbReference type="GO" id="GO:0005789">
    <property type="term" value="C:endoplasmic reticulum membrane"/>
    <property type="evidence" value="ECO:0000314"/>
    <property type="project" value="UniProtKB"/>
</dbReference>
<dbReference type="GO" id="GO:0020037">
    <property type="term" value="F:heme binding"/>
    <property type="evidence" value="ECO:0007669"/>
    <property type="project" value="InterPro"/>
</dbReference>
<dbReference type="GO" id="GO:0005506">
    <property type="term" value="F:iron ion binding"/>
    <property type="evidence" value="ECO:0007669"/>
    <property type="project" value="InterPro"/>
</dbReference>
<dbReference type="GO" id="GO:0004497">
    <property type="term" value="F:monooxygenase activity"/>
    <property type="evidence" value="ECO:0000314"/>
    <property type="project" value="UniProtKB"/>
</dbReference>
<dbReference type="GO" id="GO:0016705">
    <property type="term" value="F:oxidoreductase activity, acting on paired donors, with incorporation or reduction of molecular oxygen"/>
    <property type="evidence" value="ECO:0007669"/>
    <property type="project" value="InterPro"/>
</dbReference>
<dbReference type="GO" id="GO:0035835">
    <property type="term" value="P:indole alkaloid biosynthetic process"/>
    <property type="evidence" value="ECO:0000314"/>
    <property type="project" value="UniProtKB"/>
</dbReference>
<dbReference type="CDD" id="cd11072">
    <property type="entry name" value="CYP71-like"/>
    <property type="match status" value="1"/>
</dbReference>
<dbReference type="FunFam" id="1.10.630.10:FF:000043">
    <property type="entry name" value="Cytochrome P450 99A2"/>
    <property type="match status" value="1"/>
</dbReference>
<dbReference type="Gene3D" id="1.10.630.10">
    <property type="entry name" value="Cytochrome P450"/>
    <property type="match status" value="1"/>
</dbReference>
<dbReference type="InterPro" id="IPR001128">
    <property type="entry name" value="Cyt_P450"/>
</dbReference>
<dbReference type="InterPro" id="IPR017972">
    <property type="entry name" value="Cyt_P450_CS"/>
</dbReference>
<dbReference type="InterPro" id="IPR002401">
    <property type="entry name" value="Cyt_P450_E_grp-I"/>
</dbReference>
<dbReference type="InterPro" id="IPR036396">
    <property type="entry name" value="Cyt_P450_sf"/>
</dbReference>
<dbReference type="PANTHER" id="PTHR47955:SF8">
    <property type="entry name" value="CYTOCHROME P450 71D11-LIKE"/>
    <property type="match status" value="1"/>
</dbReference>
<dbReference type="PANTHER" id="PTHR47955">
    <property type="entry name" value="CYTOCHROME P450 FAMILY 71 PROTEIN"/>
    <property type="match status" value="1"/>
</dbReference>
<dbReference type="Pfam" id="PF00067">
    <property type="entry name" value="p450"/>
    <property type="match status" value="1"/>
</dbReference>
<dbReference type="PRINTS" id="PR00463">
    <property type="entry name" value="EP450I"/>
</dbReference>
<dbReference type="PRINTS" id="PR00385">
    <property type="entry name" value="P450"/>
</dbReference>
<dbReference type="SUPFAM" id="SSF48264">
    <property type="entry name" value="Cytochrome P450"/>
    <property type="match status" value="1"/>
</dbReference>
<dbReference type="PROSITE" id="PS00086">
    <property type="entry name" value="CYTOCHROME_P450"/>
    <property type="match status" value="1"/>
</dbReference>
<feature type="chain" id="PRO_5016633182" description="Tabersonine 6,7-epoxidase isoform 1">
    <location>
        <begin position="1"/>
        <end position="506"/>
    </location>
</feature>
<feature type="transmembrane region" description="Helical" evidence="2">
    <location>
        <begin position="1"/>
        <end position="21"/>
    </location>
</feature>
<feature type="binding site" description="axial binding residue" evidence="1">
    <location>
        <position position="441"/>
    </location>
    <ligand>
        <name>heme</name>
        <dbReference type="ChEBI" id="CHEBI:30413"/>
    </ligand>
    <ligandPart>
        <name>Fe</name>
        <dbReference type="ChEBI" id="CHEBI:18248"/>
    </ligandPart>
</feature>
<feature type="glycosylation site" description="N-linked (GlcNAc...) asparagine" evidence="3">
    <location>
        <position position="173"/>
    </location>
</feature>
<feature type="glycosylation site" description="N-linked (GlcNAc...) asparagine" evidence="3">
    <location>
        <position position="261"/>
    </location>
</feature>
<organism>
    <name type="scientific">Catharanthus roseus</name>
    <name type="common">Madagascar periwinkle</name>
    <name type="synonym">Vinca rosea</name>
    <dbReference type="NCBI Taxonomy" id="4058"/>
    <lineage>
        <taxon>Eukaryota</taxon>
        <taxon>Viridiplantae</taxon>
        <taxon>Streptophyta</taxon>
        <taxon>Embryophyta</taxon>
        <taxon>Tracheophyta</taxon>
        <taxon>Spermatophyta</taxon>
        <taxon>Magnoliopsida</taxon>
        <taxon>eudicotyledons</taxon>
        <taxon>Gunneridae</taxon>
        <taxon>Pentapetalae</taxon>
        <taxon>asterids</taxon>
        <taxon>lamiids</taxon>
        <taxon>Gentianales</taxon>
        <taxon>Apocynaceae</taxon>
        <taxon>Rauvolfioideae</taxon>
        <taxon>Vinceae</taxon>
        <taxon>Catharanthinae</taxon>
        <taxon>Catharanthus</taxon>
    </lineage>
</organism>
<evidence type="ECO:0000250" key="1">
    <source>
        <dbReference type="UniProtKB" id="Q96242"/>
    </source>
</evidence>
<evidence type="ECO:0000255" key="2"/>
<evidence type="ECO:0000255" key="3">
    <source>
        <dbReference type="PROSITE-ProRule" id="PRU00498"/>
    </source>
</evidence>
<evidence type="ECO:0000269" key="4">
    <source>
    </source>
</evidence>
<evidence type="ECO:0000269" key="5">
    <source>
    </source>
</evidence>
<evidence type="ECO:0000303" key="6">
    <source>
    </source>
</evidence>
<evidence type="ECO:0000303" key="7">
    <source>
    </source>
</evidence>
<evidence type="ECO:0000305" key="8"/>
<protein>
    <recommendedName>
        <fullName evidence="6 7">Tabersonine 6,7-epoxidase isoform 1</fullName>
        <ecNumber evidence="4 5">1.14.14.-</ecNumber>
    </recommendedName>
    <alternativeName>
        <fullName evidence="6 7">Cytochrome P450 71D521</fullName>
    </alternativeName>
</protein>
<sequence length="506" mass="57513">MEFVVSLFAFVVSCFILLKVAKNSKNPKRNTNLELPPGPKQLPIIGNLHQLGGGLAHHVLRNLGKQYGPLMHLKIGELSTIVVSSTEIAKEVFKTHDIHFSNRPSHILVFKIVSYDYKDIVLSQYGKYWRELRKVCNLELLSPNRVQSFRSIREDAVLNMMKSISSNDGKVVNLSEMILSLIYGITARAAFGVWSKKHEEFIRLESEIQRLATTFVLADMFPSIKFLGALSGLRYKVEKVHKKVDDILEGILKEHRRQNNNMTEENGKKDLVDVLLNIQKNGDMETPFTDQHIKAIIFDMFSAGTLTSTIAVDWAMAEMMKNPSVLKRAQDEVRNVYNGIGNVDESKLDELKYLQAVIKETLRIHPGTPIVHRETREECEINGYRIPAKARVMVNAWAISRDPNYWPEPDIFKPERFLGSEVDFKGTHFEYIPFGAGRRICPGISYAIANVQLPLAQLLYHFEWKLPGGMKPEELDMTEILGTAAQRKENLLLIPNSHSCSSLKQV</sequence>
<keyword id="KW-0017">Alkaloid metabolism</keyword>
<keyword id="KW-0256">Endoplasmic reticulum</keyword>
<keyword id="KW-0325">Glycoprotein</keyword>
<keyword id="KW-0349">Heme</keyword>
<keyword id="KW-0408">Iron</keyword>
<keyword id="KW-0472">Membrane</keyword>
<keyword id="KW-0479">Metal-binding</keyword>
<keyword id="KW-0503">Monooxygenase</keyword>
<keyword id="KW-0560">Oxidoreductase</keyword>
<keyword id="KW-0812">Transmembrane</keyword>
<keyword id="KW-1133">Transmembrane helix</keyword>
<reference key="1">
    <citation type="journal article" date="2018" name="Plant Physiol.">
        <title>Two tabersonine 6,7-epoxidases initiate lochnericine-derived alkaloid biosynthesis in Catharanthus roseus.</title>
        <authorList>
            <person name="Carqueijeiro I.T."/>
            <person name="Brown S."/>
            <person name="Chung K."/>
            <person name="Dang T.-T."/>
            <person name="Walia M."/>
            <person name="Besseau S."/>
            <person name="Duge de Bernonville T."/>
            <person name="Oudin A."/>
            <person name="Lanoue A."/>
            <person name="Billet K."/>
            <person name="Munsch T."/>
            <person name="Koudounas K."/>
            <person name="Melin C."/>
            <person name="Godon C."/>
            <person name="Razafimandimby B."/>
            <person name="de Craene J.-O."/>
            <person name="Glevarec G."/>
            <person name="Marc J."/>
            <person name="Giglioli-Guivarc'h N."/>
            <person name="Clastre M."/>
            <person name="St-Pierre B."/>
            <person name="Papon N."/>
            <person name="Andrade R.B."/>
            <person name="O'Connor S.E."/>
            <person name="Courdavault V."/>
        </authorList>
    </citation>
    <scope>NUCLEOTIDE SEQUENCE [MRNA]</scope>
    <scope>FUNCTION</scope>
    <scope>DISRUPTION PHENOTYPE</scope>
    <scope>CATALYTIC ACTIVITY</scope>
    <scope>TISSUE SPECIFICITY</scope>
    <scope>BIOPHYSICOCHEMICAL PROPERTIES</scope>
    <scope>SUBCELLULAR LOCATION</scope>
</reference>
<reference key="2">
    <citation type="journal article" date="2019" name="Plant J.">
        <title>The assembly of (+)-vincadifformine- and (-)-tabersonine-derived monoterpenoid indole alkaloids in Catharanthus roseus involves separate branch pathways.</title>
        <authorList>
            <person name="Williams D."/>
            <person name="Qu Y."/>
            <person name="Simionescu R."/>
            <person name="De Luca V."/>
        </authorList>
    </citation>
    <scope>FUNCTION</scope>
    <scope>CATALYTIC ACTIVITY</scope>
    <scope>PATHWAY</scope>
</reference>
<accession>A0A343URW6</accession>
<name>TEX1_CATRO</name>